<comment type="function">
    <text evidence="1">Catalyzes the conversion of 4-hydroxy-tetrahydrodipicolinate (HTPA) to tetrahydrodipicolinate.</text>
</comment>
<comment type="catalytic activity">
    <reaction evidence="1">
        <text>(S)-2,3,4,5-tetrahydrodipicolinate + NAD(+) + H2O = (2S,4S)-4-hydroxy-2,3,4,5-tetrahydrodipicolinate + NADH + H(+)</text>
        <dbReference type="Rhea" id="RHEA:35323"/>
        <dbReference type="ChEBI" id="CHEBI:15377"/>
        <dbReference type="ChEBI" id="CHEBI:15378"/>
        <dbReference type="ChEBI" id="CHEBI:16845"/>
        <dbReference type="ChEBI" id="CHEBI:57540"/>
        <dbReference type="ChEBI" id="CHEBI:57945"/>
        <dbReference type="ChEBI" id="CHEBI:67139"/>
        <dbReference type="EC" id="1.17.1.8"/>
    </reaction>
</comment>
<comment type="catalytic activity">
    <reaction evidence="1">
        <text>(S)-2,3,4,5-tetrahydrodipicolinate + NADP(+) + H2O = (2S,4S)-4-hydroxy-2,3,4,5-tetrahydrodipicolinate + NADPH + H(+)</text>
        <dbReference type="Rhea" id="RHEA:35331"/>
        <dbReference type="ChEBI" id="CHEBI:15377"/>
        <dbReference type="ChEBI" id="CHEBI:15378"/>
        <dbReference type="ChEBI" id="CHEBI:16845"/>
        <dbReference type="ChEBI" id="CHEBI:57783"/>
        <dbReference type="ChEBI" id="CHEBI:58349"/>
        <dbReference type="ChEBI" id="CHEBI:67139"/>
        <dbReference type="EC" id="1.17.1.8"/>
    </reaction>
</comment>
<comment type="pathway">
    <text evidence="1">Amino-acid biosynthesis; L-lysine biosynthesis via DAP pathway; (S)-tetrahydrodipicolinate from L-aspartate: step 4/4.</text>
</comment>
<comment type="subcellular location">
    <subcellularLocation>
        <location evidence="1">Cytoplasm</location>
    </subcellularLocation>
</comment>
<comment type="similarity">
    <text evidence="1">Belongs to the DapB family.</text>
</comment>
<comment type="caution">
    <text evidence="2">Was originally thought to be a dihydrodipicolinate reductase (DHDPR), catalyzing the conversion of dihydrodipicolinate to tetrahydrodipicolinate. However, it was shown in E.coli that the substrate of the enzymatic reaction is not dihydrodipicolinate (DHDP) but in fact (2S,4S)-4-hydroxy-2,3,4,5-tetrahydrodipicolinic acid (HTPA), the product released by the DapA-catalyzed reaction.</text>
</comment>
<protein>
    <recommendedName>
        <fullName evidence="1">4-hydroxy-tetrahydrodipicolinate reductase</fullName>
        <shortName evidence="1">HTPA reductase</shortName>
        <ecNumber evidence="1">1.17.1.8</ecNumber>
    </recommendedName>
</protein>
<feature type="chain" id="PRO_1000117360" description="4-hydroxy-tetrahydrodipicolinate reductase">
    <location>
        <begin position="1"/>
        <end position="266"/>
    </location>
</feature>
<feature type="active site" description="Proton donor/acceptor" evidence="1">
    <location>
        <position position="155"/>
    </location>
</feature>
<feature type="active site" description="Proton donor" evidence="1">
    <location>
        <position position="159"/>
    </location>
</feature>
<feature type="binding site" evidence="1">
    <location>
        <begin position="10"/>
        <end position="15"/>
    </location>
    <ligand>
        <name>NAD(+)</name>
        <dbReference type="ChEBI" id="CHEBI:57540"/>
    </ligand>
</feature>
<feature type="binding site" evidence="1">
    <location>
        <position position="38"/>
    </location>
    <ligand>
        <name>NADP(+)</name>
        <dbReference type="ChEBI" id="CHEBI:58349"/>
    </ligand>
</feature>
<feature type="binding site" evidence="1">
    <location>
        <begin position="99"/>
        <end position="101"/>
    </location>
    <ligand>
        <name>NAD(+)</name>
        <dbReference type="ChEBI" id="CHEBI:57540"/>
    </ligand>
</feature>
<feature type="binding site" evidence="1">
    <location>
        <begin position="125"/>
        <end position="128"/>
    </location>
    <ligand>
        <name>NAD(+)</name>
        <dbReference type="ChEBI" id="CHEBI:57540"/>
    </ligand>
</feature>
<feature type="binding site" evidence="1">
    <location>
        <position position="156"/>
    </location>
    <ligand>
        <name>(S)-2,3,4,5-tetrahydrodipicolinate</name>
        <dbReference type="ChEBI" id="CHEBI:16845"/>
    </ligand>
</feature>
<feature type="binding site" evidence="1">
    <location>
        <begin position="165"/>
        <end position="166"/>
    </location>
    <ligand>
        <name>(S)-2,3,4,5-tetrahydrodipicolinate</name>
        <dbReference type="ChEBI" id="CHEBI:16845"/>
    </ligand>
</feature>
<sequence>MKEIKVIIAGPRGRMGHEAVLLMERTEHFNLVAAVDYKHGGEKISDLPGMPALHAPIYADLHTCLDEVEADVLLDLTTPEVGKQHVTLAVERGLRSVIGTTGFTEEELARLTENAKEKAVGTIIAPNFAIGAVLMMKFSQMAAKYFQDVEVIELHHDQKLDAPSGTAVKTVELIRQNRESKQQGHPNEVEQLAGARGANVDGIHIHSVRLPGLIAHQEVMFGGDGQMLTVRHDSFNRASFMSGVKLSIETVMNLDHLVYGLENIID</sequence>
<name>DAPB_BACC4</name>
<gene>
    <name evidence="1" type="primary">dapB</name>
    <name type="ordered locus">BCB4264_A1588</name>
</gene>
<organism>
    <name type="scientific">Bacillus cereus (strain B4264)</name>
    <dbReference type="NCBI Taxonomy" id="405532"/>
    <lineage>
        <taxon>Bacteria</taxon>
        <taxon>Bacillati</taxon>
        <taxon>Bacillota</taxon>
        <taxon>Bacilli</taxon>
        <taxon>Bacillales</taxon>
        <taxon>Bacillaceae</taxon>
        <taxon>Bacillus</taxon>
        <taxon>Bacillus cereus group</taxon>
    </lineage>
</organism>
<reference key="1">
    <citation type="submission" date="2008-10" db="EMBL/GenBank/DDBJ databases">
        <title>Genome sequence of Bacillus cereus B4264.</title>
        <authorList>
            <person name="Dodson R.J."/>
            <person name="Durkin A.S."/>
            <person name="Rosovitz M.J."/>
            <person name="Rasko D.A."/>
            <person name="Hoffmaster A."/>
            <person name="Ravel J."/>
            <person name="Sutton G."/>
        </authorList>
    </citation>
    <scope>NUCLEOTIDE SEQUENCE [LARGE SCALE GENOMIC DNA]</scope>
    <source>
        <strain>B4264</strain>
    </source>
</reference>
<dbReference type="EC" id="1.17.1.8" evidence="1"/>
<dbReference type="EMBL" id="CP001176">
    <property type="protein sequence ID" value="ACK59940.1"/>
    <property type="molecule type" value="Genomic_DNA"/>
</dbReference>
<dbReference type="RefSeq" id="WP_000658810.1">
    <property type="nucleotide sequence ID" value="NZ_VEHB01000003.1"/>
</dbReference>
<dbReference type="SMR" id="B7HHT6"/>
<dbReference type="KEGG" id="bcb:BCB4264_A1588"/>
<dbReference type="HOGENOM" id="CLU_047479_0_1_9"/>
<dbReference type="UniPathway" id="UPA00034">
    <property type="reaction ID" value="UER00018"/>
</dbReference>
<dbReference type="Proteomes" id="UP000007096">
    <property type="component" value="Chromosome"/>
</dbReference>
<dbReference type="GO" id="GO:0005829">
    <property type="term" value="C:cytosol"/>
    <property type="evidence" value="ECO:0007669"/>
    <property type="project" value="TreeGrafter"/>
</dbReference>
<dbReference type="GO" id="GO:0008839">
    <property type="term" value="F:4-hydroxy-tetrahydrodipicolinate reductase"/>
    <property type="evidence" value="ECO:0007669"/>
    <property type="project" value="UniProtKB-EC"/>
</dbReference>
<dbReference type="GO" id="GO:0051287">
    <property type="term" value="F:NAD binding"/>
    <property type="evidence" value="ECO:0007669"/>
    <property type="project" value="UniProtKB-UniRule"/>
</dbReference>
<dbReference type="GO" id="GO:0050661">
    <property type="term" value="F:NADP binding"/>
    <property type="evidence" value="ECO:0007669"/>
    <property type="project" value="UniProtKB-UniRule"/>
</dbReference>
<dbReference type="GO" id="GO:0016726">
    <property type="term" value="F:oxidoreductase activity, acting on CH or CH2 groups, NAD or NADP as acceptor"/>
    <property type="evidence" value="ECO:0007669"/>
    <property type="project" value="UniProtKB-UniRule"/>
</dbReference>
<dbReference type="GO" id="GO:0019877">
    <property type="term" value="P:diaminopimelate biosynthetic process"/>
    <property type="evidence" value="ECO:0007669"/>
    <property type="project" value="UniProtKB-UniRule"/>
</dbReference>
<dbReference type="GO" id="GO:0009089">
    <property type="term" value="P:lysine biosynthetic process via diaminopimelate"/>
    <property type="evidence" value="ECO:0007669"/>
    <property type="project" value="UniProtKB-UniRule"/>
</dbReference>
<dbReference type="CDD" id="cd02274">
    <property type="entry name" value="DHDPR_N"/>
    <property type="match status" value="1"/>
</dbReference>
<dbReference type="FunFam" id="3.30.360.10:FF:000009">
    <property type="entry name" value="4-hydroxy-tetrahydrodipicolinate reductase"/>
    <property type="match status" value="1"/>
</dbReference>
<dbReference type="FunFam" id="3.40.50.720:FF:000180">
    <property type="entry name" value="4-hydroxy-tetrahydrodipicolinate reductase"/>
    <property type="match status" value="1"/>
</dbReference>
<dbReference type="Gene3D" id="3.30.360.10">
    <property type="entry name" value="Dihydrodipicolinate Reductase, domain 2"/>
    <property type="match status" value="1"/>
</dbReference>
<dbReference type="Gene3D" id="3.40.50.720">
    <property type="entry name" value="NAD(P)-binding Rossmann-like Domain"/>
    <property type="match status" value="1"/>
</dbReference>
<dbReference type="HAMAP" id="MF_00102">
    <property type="entry name" value="DapB"/>
    <property type="match status" value="1"/>
</dbReference>
<dbReference type="InterPro" id="IPR022663">
    <property type="entry name" value="DapB_C"/>
</dbReference>
<dbReference type="InterPro" id="IPR000846">
    <property type="entry name" value="DapB_N"/>
</dbReference>
<dbReference type="InterPro" id="IPR022664">
    <property type="entry name" value="DapB_N_CS"/>
</dbReference>
<dbReference type="InterPro" id="IPR023940">
    <property type="entry name" value="DHDPR_bac"/>
</dbReference>
<dbReference type="InterPro" id="IPR036291">
    <property type="entry name" value="NAD(P)-bd_dom_sf"/>
</dbReference>
<dbReference type="NCBIfam" id="TIGR00036">
    <property type="entry name" value="dapB"/>
    <property type="match status" value="1"/>
</dbReference>
<dbReference type="PANTHER" id="PTHR20836:SF0">
    <property type="entry name" value="4-HYDROXY-TETRAHYDRODIPICOLINATE REDUCTASE 1, CHLOROPLASTIC-RELATED"/>
    <property type="match status" value="1"/>
</dbReference>
<dbReference type="PANTHER" id="PTHR20836">
    <property type="entry name" value="DIHYDRODIPICOLINATE REDUCTASE"/>
    <property type="match status" value="1"/>
</dbReference>
<dbReference type="Pfam" id="PF05173">
    <property type="entry name" value="DapB_C"/>
    <property type="match status" value="1"/>
</dbReference>
<dbReference type="Pfam" id="PF01113">
    <property type="entry name" value="DapB_N"/>
    <property type="match status" value="1"/>
</dbReference>
<dbReference type="PIRSF" id="PIRSF000161">
    <property type="entry name" value="DHPR"/>
    <property type="match status" value="1"/>
</dbReference>
<dbReference type="SUPFAM" id="SSF55347">
    <property type="entry name" value="Glyceraldehyde-3-phosphate dehydrogenase-like, C-terminal domain"/>
    <property type="match status" value="1"/>
</dbReference>
<dbReference type="SUPFAM" id="SSF51735">
    <property type="entry name" value="NAD(P)-binding Rossmann-fold domains"/>
    <property type="match status" value="1"/>
</dbReference>
<dbReference type="PROSITE" id="PS01298">
    <property type="entry name" value="DAPB"/>
    <property type="match status" value="1"/>
</dbReference>
<keyword id="KW-0028">Amino-acid biosynthesis</keyword>
<keyword id="KW-0963">Cytoplasm</keyword>
<keyword id="KW-0220">Diaminopimelate biosynthesis</keyword>
<keyword id="KW-0457">Lysine biosynthesis</keyword>
<keyword id="KW-0520">NAD</keyword>
<keyword id="KW-0521">NADP</keyword>
<keyword id="KW-0560">Oxidoreductase</keyword>
<evidence type="ECO:0000255" key="1">
    <source>
        <dbReference type="HAMAP-Rule" id="MF_00102"/>
    </source>
</evidence>
<evidence type="ECO:0000305" key="2"/>
<accession>B7HHT6</accession>
<proteinExistence type="inferred from homology"/>